<gene>
    <name type="primary">SQS1</name>
    <name type="ordered locus">KLLA0D19558g</name>
</gene>
<reference key="1">
    <citation type="journal article" date="2004" name="Nature">
        <title>Genome evolution in yeasts.</title>
        <authorList>
            <person name="Dujon B."/>
            <person name="Sherman D."/>
            <person name="Fischer G."/>
            <person name="Durrens P."/>
            <person name="Casaregola S."/>
            <person name="Lafontaine I."/>
            <person name="de Montigny J."/>
            <person name="Marck C."/>
            <person name="Neuveglise C."/>
            <person name="Talla E."/>
            <person name="Goffard N."/>
            <person name="Frangeul L."/>
            <person name="Aigle M."/>
            <person name="Anthouard V."/>
            <person name="Babour A."/>
            <person name="Barbe V."/>
            <person name="Barnay S."/>
            <person name="Blanchin S."/>
            <person name="Beckerich J.-M."/>
            <person name="Beyne E."/>
            <person name="Bleykasten C."/>
            <person name="Boisrame A."/>
            <person name="Boyer J."/>
            <person name="Cattolico L."/>
            <person name="Confanioleri F."/>
            <person name="de Daruvar A."/>
            <person name="Despons L."/>
            <person name="Fabre E."/>
            <person name="Fairhead C."/>
            <person name="Ferry-Dumazet H."/>
            <person name="Groppi A."/>
            <person name="Hantraye F."/>
            <person name="Hennequin C."/>
            <person name="Jauniaux N."/>
            <person name="Joyet P."/>
            <person name="Kachouri R."/>
            <person name="Kerrest A."/>
            <person name="Koszul R."/>
            <person name="Lemaire M."/>
            <person name="Lesur I."/>
            <person name="Ma L."/>
            <person name="Muller H."/>
            <person name="Nicaud J.-M."/>
            <person name="Nikolski M."/>
            <person name="Oztas S."/>
            <person name="Ozier-Kalogeropoulos O."/>
            <person name="Pellenz S."/>
            <person name="Potier S."/>
            <person name="Richard G.-F."/>
            <person name="Straub M.-L."/>
            <person name="Suleau A."/>
            <person name="Swennen D."/>
            <person name="Tekaia F."/>
            <person name="Wesolowski-Louvel M."/>
            <person name="Westhof E."/>
            <person name="Wirth B."/>
            <person name="Zeniou-Meyer M."/>
            <person name="Zivanovic Y."/>
            <person name="Bolotin-Fukuhara M."/>
            <person name="Thierry A."/>
            <person name="Bouchier C."/>
            <person name="Caudron B."/>
            <person name="Scarpelli C."/>
            <person name="Gaillardin C."/>
            <person name="Weissenbach J."/>
            <person name="Wincker P."/>
            <person name="Souciet J.-L."/>
        </authorList>
    </citation>
    <scope>NUCLEOTIDE SEQUENCE [LARGE SCALE GENOMIC DNA]</scope>
    <source>
        <strain>ATCC 8585 / CBS 2359 / DSM 70799 / NBRC 1267 / NRRL Y-1140 / WM37</strain>
    </source>
</reference>
<name>SQS1_KLULA</name>
<accession>Q6CQ59</accession>
<protein>
    <recommendedName>
        <fullName>Protein SQS1</fullName>
    </recommendedName>
</protein>
<comment type="function">
    <text evidence="1">May be involved in splicing.</text>
</comment>
<comment type="subcellular location">
    <subcellularLocation>
        <location evidence="1">Cytoplasm</location>
    </subcellularLocation>
    <subcellularLocation>
        <location evidence="1">Nucleus</location>
    </subcellularLocation>
</comment>
<comment type="similarity">
    <text evidence="4">Belongs to the SQS1 family.</text>
</comment>
<dbReference type="EMBL" id="CR382124">
    <property type="protein sequence ID" value="CAH01026.1"/>
    <property type="molecule type" value="Genomic_DNA"/>
</dbReference>
<dbReference type="RefSeq" id="XP_453930.1">
    <property type="nucleotide sequence ID" value="XM_453930.1"/>
</dbReference>
<dbReference type="SMR" id="Q6CQ59"/>
<dbReference type="FunCoup" id="Q6CQ59">
    <property type="interactions" value="308"/>
</dbReference>
<dbReference type="STRING" id="284590.Q6CQ59"/>
<dbReference type="PaxDb" id="284590-Q6CQ59"/>
<dbReference type="KEGG" id="kla:KLLA0_D19558g"/>
<dbReference type="eggNOG" id="KOG0154">
    <property type="taxonomic scope" value="Eukaryota"/>
</dbReference>
<dbReference type="HOGENOM" id="CLU_021974_1_0_1"/>
<dbReference type="InParanoid" id="Q6CQ59"/>
<dbReference type="OMA" id="PVFMRID"/>
<dbReference type="Proteomes" id="UP000000598">
    <property type="component" value="Chromosome D"/>
</dbReference>
<dbReference type="GO" id="GO:0005737">
    <property type="term" value="C:cytoplasm"/>
    <property type="evidence" value="ECO:0007669"/>
    <property type="project" value="UniProtKB-SubCell"/>
</dbReference>
<dbReference type="GO" id="GO:0005634">
    <property type="term" value="C:nucleus"/>
    <property type="evidence" value="ECO:0007669"/>
    <property type="project" value="UniProtKB-SubCell"/>
</dbReference>
<dbReference type="GO" id="GO:0003676">
    <property type="term" value="F:nucleic acid binding"/>
    <property type="evidence" value="ECO:0007669"/>
    <property type="project" value="InterPro"/>
</dbReference>
<dbReference type="GO" id="GO:0006397">
    <property type="term" value="P:mRNA processing"/>
    <property type="evidence" value="ECO:0007669"/>
    <property type="project" value="UniProtKB-KW"/>
</dbReference>
<dbReference type="GO" id="GO:0008380">
    <property type="term" value="P:RNA splicing"/>
    <property type="evidence" value="ECO:0007669"/>
    <property type="project" value="UniProtKB-KW"/>
</dbReference>
<dbReference type="CDD" id="cd02646">
    <property type="entry name" value="R3H_G-patch"/>
    <property type="match status" value="1"/>
</dbReference>
<dbReference type="InterPro" id="IPR000467">
    <property type="entry name" value="G_patch_dom"/>
</dbReference>
<dbReference type="InterPro" id="IPR034082">
    <property type="entry name" value="R3H_G-patch"/>
</dbReference>
<dbReference type="InterPro" id="IPR051189">
    <property type="entry name" value="Splicing_assoc_domain"/>
</dbReference>
<dbReference type="PANTHER" id="PTHR14195">
    <property type="entry name" value="G PATCH DOMAIN CONTAINING PROTEIN 2"/>
    <property type="match status" value="1"/>
</dbReference>
<dbReference type="Pfam" id="PF01585">
    <property type="entry name" value="G-patch"/>
    <property type="match status" value="1"/>
</dbReference>
<dbReference type="SMART" id="SM00443">
    <property type="entry name" value="G_patch"/>
    <property type="match status" value="1"/>
</dbReference>
<dbReference type="PROSITE" id="PS50174">
    <property type="entry name" value="G_PATCH"/>
    <property type="match status" value="1"/>
</dbReference>
<keyword id="KW-0963">Cytoplasm</keyword>
<keyword id="KW-0507">mRNA processing</keyword>
<keyword id="KW-0508">mRNA splicing</keyword>
<keyword id="KW-0539">Nucleus</keyword>
<keyword id="KW-1185">Reference proteome</keyword>
<organism>
    <name type="scientific">Kluyveromyces lactis (strain ATCC 8585 / CBS 2359 / DSM 70799 / NBRC 1267 / NRRL Y-1140 / WM37)</name>
    <name type="common">Yeast</name>
    <name type="synonym">Candida sphaerica</name>
    <dbReference type="NCBI Taxonomy" id="284590"/>
    <lineage>
        <taxon>Eukaryota</taxon>
        <taxon>Fungi</taxon>
        <taxon>Dikarya</taxon>
        <taxon>Ascomycota</taxon>
        <taxon>Saccharomycotina</taxon>
        <taxon>Saccharomycetes</taxon>
        <taxon>Saccharomycetales</taxon>
        <taxon>Saccharomycetaceae</taxon>
        <taxon>Kluyveromyces</taxon>
    </lineage>
</organism>
<proteinExistence type="inferred from homology"/>
<evidence type="ECO:0000250" key="1"/>
<evidence type="ECO:0000255" key="2">
    <source>
        <dbReference type="PROSITE-ProRule" id="PRU00092"/>
    </source>
</evidence>
<evidence type="ECO:0000256" key="3">
    <source>
        <dbReference type="SAM" id="MobiDB-lite"/>
    </source>
</evidence>
<evidence type="ECO:0000305" key="4"/>
<feature type="chain" id="PRO_0000324997" description="Protein SQS1">
    <location>
        <begin position="1"/>
        <end position="740"/>
    </location>
</feature>
<feature type="domain" description="R3H">
    <location>
        <begin position="561"/>
        <end position="623"/>
    </location>
</feature>
<feature type="domain" description="G-patch" evidence="2">
    <location>
        <begin position="690"/>
        <end position="737"/>
    </location>
</feature>
<feature type="region of interest" description="Disordered" evidence="3">
    <location>
        <begin position="1"/>
        <end position="52"/>
    </location>
</feature>
<feature type="region of interest" description="Disordered" evidence="3">
    <location>
        <begin position="67"/>
        <end position="93"/>
    </location>
</feature>
<feature type="region of interest" description="Disordered" evidence="3">
    <location>
        <begin position="126"/>
        <end position="191"/>
    </location>
</feature>
<feature type="region of interest" description="Disordered" evidence="3">
    <location>
        <begin position="435"/>
        <end position="464"/>
    </location>
</feature>
<feature type="compositionally biased region" description="Basic residues" evidence="3">
    <location>
        <begin position="1"/>
        <end position="22"/>
    </location>
</feature>
<feature type="compositionally biased region" description="Polar residues" evidence="3">
    <location>
        <begin position="133"/>
        <end position="142"/>
    </location>
</feature>
<feature type="compositionally biased region" description="Acidic residues" evidence="3">
    <location>
        <begin position="146"/>
        <end position="159"/>
    </location>
</feature>
<feature type="compositionally biased region" description="Polar residues" evidence="3">
    <location>
        <begin position="162"/>
        <end position="190"/>
    </location>
</feature>
<feature type="compositionally biased region" description="Acidic residues" evidence="3">
    <location>
        <begin position="435"/>
        <end position="456"/>
    </location>
</feature>
<sequence length="740" mass="83920">MAKRHKHYNARGGGKSKSKKSKPHGESRQRKNHRGGTSINRNRSELLLGGGDLMNPHQVEDYYFGSTAKKSSLRSGGFRPGRLTEADELDTGRLPSRKRPVEFIKAKELYDPSHDLILKLVKKNQHFDEPNSDGYNSSQSVSLREEEQDGEDEQQDVDTQEIPSKNTTVKIRSDNVVSENGDSESNSSANDAELFYVDMEGEEKTADNYIKTVDVDVQERSLKLNDCTEFQPTLRVGNVELNLKDGGSGSIEVDKPKSSYHPFHSYIQNVMENVQNYDSDDDFDENGNDVEQSFSISSDYEFESSEELITTGGTIEQFDSSMKSLTIEEIPGKTITASLTTKDISQGNSDNSSGDESFGFCEDDFEGSIGKVFVSNIRIGAGTHSYHVSCHEIYGDSEPRWVDDEMMNEIIAEMGLPEHRFRAYYKHLHKSFIEEEEEPEEYADIPFDDDDSDDSTADQCEPFAEDDLGEDLDDLVSYALKYNKQRKIEYHTTSLDIRGKGRNKHLIFDQTAGMDEDIKLMLQNKFATRQINKTKKRRAKEDFLSQSHASSTDLLMKYPYGLHIQNIKDEFDAFYRNDRQSITFPPLDPHGNKIIGKFAYNYFMKASNIGKGKSTKVYVEKTKKTRFNKPAYHIISQLLRKRPVFMRIDQKAPTDTQSTFNRTVRLKVSKENFNISEGQIVGEDAPEIGIDNIGRRMLEKLGWNIGQGLGAHGNQGINEPILAKVKKNKSGLRHTSENQQ</sequence>